<name>ADRB1_PIG</name>
<keyword id="KW-1003">Cell membrane</keyword>
<keyword id="KW-1015">Disulfide bond</keyword>
<keyword id="KW-0967">Endosome</keyword>
<keyword id="KW-0297">G-protein coupled receptor</keyword>
<keyword id="KW-0325">Glycoprotein</keyword>
<keyword id="KW-0449">Lipoprotein</keyword>
<keyword id="KW-0472">Membrane</keyword>
<keyword id="KW-0564">Palmitate</keyword>
<keyword id="KW-0597">Phosphoprotein</keyword>
<keyword id="KW-0675">Receptor</keyword>
<keyword id="KW-1185">Reference proteome</keyword>
<keyword id="KW-0807">Transducer</keyword>
<keyword id="KW-0812">Transmembrane</keyword>
<keyword id="KW-1133">Transmembrane helix</keyword>
<evidence type="ECO:0000250" key="1"/>
<evidence type="ECO:0000250" key="2">
    <source>
        <dbReference type="UniProtKB" id="P08588"/>
    </source>
</evidence>
<evidence type="ECO:0000250" key="3">
    <source>
        <dbReference type="UniProtKB" id="P18090"/>
    </source>
</evidence>
<evidence type="ECO:0000250" key="4">
    <source>
        <dbReference type="UniProtKB" id="P34971"/>
    </source>
</evidence>
<evidence type="ECO:0000255" key="5"/>
<evidence type="ECO:0000255" key="6">
    <source>
        <dbReference type="PROSITE-ProRule" id="PRU00521"/>
    </source>
</evidence>
<evidence type="ECO:0000256" key="7">
    <source>
        <dbReference type="SAM" id="MobiDB-lite"/>
    </source>
</evidence>
<evidence type="ECO:0000305" key="8"/>
<organism>
    <name type="scientific">Sus scrofa</name>
    <name type="common">Pig</name>
    <dbReference type="NCBI Taxonomy" id="9823"/>
    <lineage>
        <taxon>Eukaryota</taxon>
        <taxon>Metazoa</taxon>
        <taxon>Chordata</taxon>
        <taxon>Craniata</taxon>
        <taxon>Vertebrata</taxon>
        <taxon>Euteleostomi</taxon>
        <taxon>Mammalia</taxon>
        <taxon>Eutheria</taxon>
        <taxon>Laurasiatheria</taxon>
        <taxon>Artiodactyla</taxon>
        <taxon>Suina</taxon>
        <taxon>Suidae</taxon>
        <taxon>Sus</taxon>
    </lineage>
</organism>
<dbReference type="EMBL" id="AF042454">
    <property type="protein sequence ID" value="AAB97525.1"/>
    <property type="molecule type" value="Genomic_DNA"/>
</dbReference>
<dbReference type="EMBL" id="U56425">
    <property type="protein sequence ID" value="AAC06330.1"/>
    <property type="molecule type" value="mRNA"/>
</dbReference>
<dbReference type="RefSeq" id="NP_001116546.1">
    <property type="nucleotide sequence ID" value="NM_001123074.1"/>
</dbReference>
<dbReference type="SMR" id="Q28998"/>
<dbReference type="FunCoup" id="Q28998">
    <property type="interactions" value="117"/>
</dbReference>
<dbReference type="STRING" id="9823.ENSSSCP00000011344"/>
<dbReference type="BindingDB" id="Q28998"/>
<dbReference type="ChEMBL" id="CHEMBL4351"/>
<dbReference type="GlyCosmos" id="Q28998">
    <property type="glycosylation" value="1 site, No reported glycans"/>
</dbReference>
<dbReference type="GlyGen" id="Q28998">
    <property type="glycosylation" value="1 site"/>
</dbReference>
<dbReference type="PaxDb" id="9823-ENSSSCP00000011344"/>
<dbReference type="GeneID" id="397355"/>
<dbReference type="KEGG" id="ssc:397355"/>
<dbReference type="CTD" id="153"/>
<dbReference type="eggNOG" id="KOG3656">
    <property type="taxonomic scope" value="Eukaryota"/>
</dbReference>
<dbReference type="InParanoid" id="Q28998"/>
<dbReference type="OrthoDB" id="5975661at2759"/>
<dbReference type="PRO" id="PR:Q28998"/>
<dbReference type="Proteomes" id="UP000008227">
    <property type="component" value="Unplaced"/>
</dbReference>
<dbReference type="Proteomes" id="UP000314985">
    <property type="component" value="Unplaced"/>
</dbReference>
<dbReference type="Proteomes" id="UP000694570">
    <property type="component" value="Unplaced"/>
</dbReference>
<dbReference type="Proteomes" id="UP000694571">
    <property type="component" value="Unplaced"/>
</dbReference>
<dbReference type="Proteomes" id="UP000694720">
    <property type="component" value="Unplaced"/>
</dbReference>
<dbReference type="Proteomes" id="UP000694722">
    <property type="component" value="Unplaced"/>
</dbReference>
<dbReference type="Proteomes" id="UP000694723">
    <property type="component" value="Unplaced"/>
</dbReference>
<dbReference type="Proteomes" id="UP000694724">
    <property type="component" value="Unplaced"/>
</dbReference>
<dbReference type="Proteomes" id="UP000694725">
    <property type="component" value="Unplaced"/>
</dbReference>
<dbReference type="Proteomes" id="UP000694726">
    <property type="component" value="Unplaced"/>
</dbReference>
<dbReference type="Proteomes" id="UP000694727">
    <property type="component" value="Unplaced"/>
</dbReference>
<dbReference type="Proteomes" id="UP000694728">
    <property type="component" value="Unplaced"/>
</dbReference>
<dbReference type="GO" id="GO:0005769">
    <property type="term" value="C:early endosome"/>
    <property type="evidence" value="ECO:0000250"/>
    <property type="project" value="UniProtKB"/>
</dbReference>
<dbReference type="GO" id="GO:0005886">
    <property type="term" value="C:plasma membrane"/>
    <property type="evidence" value="ECO:0000250"/>
    <property type="project" value="UniProtKB"/>
</dbReference>
<dbReference type="GO" id="GO:0004940">
    <property type="term" value="F:beta1-adrenergic receptor activity"/>
    <property type="evidence" value="ECO:0000250"/>
    <property type="project" value="UniProtKB"/>
</dbReference>
<dbReference type="GO" id="GO:0071880">
    <property type="term" value="P:adenylate cyclase-activating adrenergic receptor signaling pathway"/>
    <property type="evidence" value="ECO:0000250"/>
    <property type="project" value="UniProtKB"/>
</dbReference>
<dbReference type="GO" id="GO:0002025">
    <property type="term" value="P:norepinephrine-epinephrine-mediated vasodilation involved in regulation of systemic arterial blood pressure"/>
    <property type="evidence" value="ECO:0000318"/>
    <property type="project" value="GO_Central"/>
</dbReference>
<dbReference type="GO" id="GO:0045823">
    <property type="term" value="P:positive regulation of heart contraction"/>
    <property type="evidence" value="ECO:0007669"/>
    <property type="project" value="InterPro"/>
</dbReference>
<dbReference type="GO" id="GO:0043410">
    <property type="term" value="P:positive regulation of MAPK cascade"/>
    <property type="evidence" value="ECO:0000318"/>
    <property type="project" value="GO_Central"/>
</dbReference>
<dbReference type="GO" id="GO:0045187">
    <property type="term" value="P:regulation of circadian sleep/wake cycle, sleep"/>
    <property type="evidence" value="ECO:0000250"/>
    <property type="project" value="UniProtKB"/>
</dbReference>
<dbReference type="CDD" id="cd15958">
    <property type="entry name" value="7tmA_Beta1_AR"/>
    <property type="match status" value="1"/>
</dbReference>
<dbReference type="FunFam" id="1.20.1070.10:FF:000057">
    <property type="entry name" value="Beta-1 adrenergic receptor"/>
    <property type="match status" value="1"/>
</dbReference>
<dbReference type="Gene3D" id="1.20.1070.10">
    <property type="entry name" value="Rhodopsin 7-helix transmembrane proteins"/>
    <property type="match status" value="1"/>
</dbReference>
<dbReference type="InterPro" id="IPR002233">
    <property type="entry name" value="ADR_fam"/>
</dbReference>
<dbReference type="InterPro" id="IPR000507">
    <property type="entry name" value="ADRB1_rcpt"/>
</dbReference>
<dbReference type="InterPro" id="IPR000276">
    <property type="entry name" value="GPCR_Rhodpsn"/>
</dbReference>
<dbReference type="InterPro" id="IPR017452">
    <property type="entry name" value="GPCR_Rhodpsn_7TM"/>
</dbReference>
<dbReference type="PANTHER" id="PTHR24248">
    <property type="entry name" value="ADRENERGIC RECEPTOR-RELATED G-PROTEIN COUPLED RECEPTOR"/>
    <property type="match status" value="1"/>
</dbReference>
<dbReference type="PANTHER" id="PTHR24248:SF54">
    <property type="entry name" value="BETA-1 ADRENERGIC RECEPTOR"/>
    <property type="match status" value="1"/>
</dbReference>
<dbReference type="Pfam" id="PF00001">
    <property type="entry name" value="7tm_1"/>
    <property type="match status" value="1"/>
</dbReference>
<dbReference type="PRINTS" id="PR01103">
    <property type="entry name" value="ADRENERGICR"/>
</dbReference>
<dbReference type="PRINTS" id="PR00561">
    <property type="entry name" value="ADRENRGCB1AR"/>
</dbReference>
<dbReference type="PRINTS" id="PR00237">
    <property type="entry name" value="GPCRRHODOPSN"/>
</dbReference>
<dbReference type="SMART" id="SM01381">
    <property type="entry name" value="7TM_GPCR_Srsx"/>
    <property type="match status" value="1"/>
</dbReference>
<dbReference type="SUPFAM" id="SSF81321">
    <property type="entry name" value="Family A G protein-coupled receptor-like"/>
    <property type="match status" value="1"/>
</dbReference>
<dbReference type="PROSITE" id="PS00237">
    <property type="entry name" value="G_PROTEIN_RECEP_F1_1"/>
    <property type="match status" value="1"/>
</dbReference>
<dbReference type="PROSITE" id="PS50262">
    <property type="entry name" value="G_PROTEIN_RECEP_F1_2"/>
    <property type="match status" value="1"/>
</dbReference>
<protein>
    <recommendedName>
        <fullName>Beta-1 adrenergic receptor</fullName>
    </recommendedName>
    <alternativeName>
        <fullName>Beta-1 adrenoreceptor</fullName>
        <shortName>Beta-1 adrenoceptor</shortName>
    </alternativeName>
</protein>
<accession>Q28998</accession>
<accession>O46575</accession>
<gene>
    <name type="primary">ADRB1</name>
</gene>
<proteinExistence type="evidence at transcript level"/>
<sequence>MGAGALALGASEPCNLSSAAPLPDGAATAARLLVPASPPASLLTPASEGSVQLSQQWTAGMGLLMALIVLLIVAGNVLVIVAIAKTPRLQTLTNLFIMSLASADLVMGLLVVPFGATIVVWGRWEYGSFFCELWTSVDVLCVTASIETLCVIALDRYLAITSPFRYQSLLTRAARALVCTVWAISALVSFLPILMHWWRDKGAEARRCYNDPKCCDFVTNRAYAIASSVVSFYVPLCIMAFVYLRVFREAQKQVKKIDSCERRFLGSPARPPSPAPSPGSPLPAAAAAAPVANGRTSKRRPSRLVALREQKALKTLGIIMGVFTLCWLPFFLANVVKAFHRDLVPDRLFVFFNWLGYANSAFNPIIYCRSPDFRKAFQRLLCCARRVARGSCAAAGDGPRASGCLAVARPPPSPGAASDDDDDEEDVGAAPPAPLLEPWAGYNGGAARDSDSSLDERTPGGRASESKV</sequence>
<reference key="1">
    <citation type="journal article" date="1998" name="J. Anim. Sci.">
        <title>Nucleotide sequence of the coding region for the porcine beta1-adrenergic receptor gene.</title>
        <authorList>
            <person name="Cao H."/>
            <person name="Bidwell C.A."/>
            <person name="Williams S.K."/>
            <person name="Liang W."/>
            <person name="Mills S.E."/>
        </authorList>
    </citation>
    <scope>NUCLEOTIDE SEQUENCE [GENOMIC DNA]</scope>
</reference>
<reference key="2">
    <citation type="journal article" date="1999" name="J. Anim. Sci.">
        <title>Distribution and quantification of beta1-, beta2-, and beta3-adrenergic receptor subtype transcripts in porcine tissues.</title>
        <authorList>
            <person name="McNeel R.L."/>
            <person name="Mersmann H.J."/>
        </authorList>
    </citation>
    <scope>NUCLEOTIDE SEQUENCE [MRNA] OF 101-468</scope>
    <source>
        <tissue>Heart</tissue>
    </source>
</reference>
<feature type="chain" id="PRO_0000069123" description="Beta-1 adrenergic receptor">
    <location>
        <begin position="1"/>
        <end position="468"/>
    </location>
</feature>
<feature type="topological domain" description="Extracellular" evidence="1">
    <location>
        <begin position="1"/>
        <end position="55"/>
    </location>
</feature>
<feature type="transmembrane region" description="Helical; Name=1" evidence="1">
    <location>
        <begin position="56"/>
        <end position="84"/>
    </location>
</feature>
<feature type="topological domain" description="Cytoplasmic" evidence="1">
    <location>
        <begin position="85"/>
        <end position="93"/>
    </location>
</feature>
<feature type="transmembrane region" description="Helical; Name=2" evidence="1">
    <location>
        <begin position="94"/>
        <end position="120"/>
    </location>
</feature>
<feature type="topological domain" description="Extracellular" evidence="1">
    <location>
        <begin position="121"/>
        <end position="132"/>
    </location>
</feature>
<feature type="transmembrane region" description="Helical; Name=3" evidence="1">
    <location>
        <begin position="133"/>
        <end position="154"/>
    </location>
</feature>
<feature type="topological domain" description="Cytoplasmic" evidence="1">
    <location>
        <begin position="155"/>
        <end position="172"/>
    </location>
</feature>
<feature type="transmembrane region" description="Helical; Name=4" evidence="1">
    <location>
        <begin position="173"/>
        <end position="195"/>
    </location>
</feature>
<feature type="topological domain" description="Extracellular" evidence="1">
    <location>
        <begin position="196"/>
        <end position="221"/>
    </location>
</feature>
<feature type="transmembrane region" description="Helical; Name=5" evidence="1">
    <location>
        <begin position="222"/>
        <end position="247"/>
    </location>
</feature>
<feature type="topological domain" description="Cytoplasmic" evidence="1">
    <location>
        <begin position="248"/>
        <end position="309"/>
    </location>
</feature>
<feature type="transmembrane region" description="Helical; Name=6" evidence="1">
    <location>
        <begin position="310"/>
        <end position="339"/>
    </location>
</feature>
<feature type="topological domain" description="Extracellular" evidence="1">
    <location>
        <begin position="340"/>
        <end position="344"/>
    </location>
</feature>
<feature type="transmembrane region" description="Helical; Name=7" evidence="1">
    <location>
        <begin position="345"/>
        <end position="367"/>
    </location>
</feature>
<feature type="topological domain" description="Cytoplasmic" evidence="1">
    <location>
        <begin position="368"/>
        <end position="468"/>
    </location>
</feature>
<feature type="region of interest" description="Disordered" evidence="7">
    <location>
        <begin position="267"/>
        <end position="297"/>
    </location>
</feature>
<feature type="region of interest" description="Disordered" evidence="7">
    <location>
        <begin position="405"/>
        <end position="468"/>
    </location>
</feature>
<feature type="short sequence motif" description="PDZ-Binding" evidence="1">
    <location>
        <begin position="465"/>
        <end position="468"/>
    </location>
</feature>
<feature type="compositionally biased region" description="Pro residues" evidence="7">
    <location>
        <begin position="269"/>
        <end position="281"/>
    </location>
</feature>
<feature type="compositionally biased region" description="Low complexity" evidence="7">
    <location>
        <begin position="282"/>
        <end position="292"/>
    </location>
</feature>
<feature type="compositionally biased region" description="Acidic residues" evidence="7">
    <location>
        <begin position="418"/>
        <end position="427"/>
    </location>
</feature>
<feature type="compositionally biased region" description="Basic and acidic residues" evidence="7">
    <location>
        <begin position="448"/>
        <end position="468"/>
    </location>
</feature>
<feature type="modified residue" description="Phosphoserine" evidence="3">
    <location>
        <position position="418"/>
    </location>
</feature>
<feature type="lipid moiety-binding region" description="S-palmitoyl cysteine" evidence="1">
    <location>
        <position position="382"/>
    </location>
</feature>
<feature type="glycosylation site" description="N-linked (GlcNAc...) asparagine" evidence="5">
    <location>
        <position position="15"/>
    </location>
</feature>
<feature type="disulfide bond" evidence="6">
    <location>
        <begin position="131"/>
        <end position="215"/>
    </location>
</feature>
<feature type="disulfide bond" evidence="6">
    <location>
        <begin position="208"/>
        <end position="214"/>
    </location>
</feature>
<feature type="sequence conflict" description="In Ref. 2; AAC06330." evidence="8" ref="2">
    <original>A</original>
    <variation>AR</variation>
    <location>
        <position position="173"/>
    </location>
</feature>
<feature type="sequence conflict" description="In Ref. 2; AAC06330." evidence="8" ref="2">
    <original>L</original>
    <variation>V</variation>
    <location>
        <position position="316"/>
    </location>
</feature>
<feature type="sequence conflict" description="In Ref. 2; AAC06330." evidence="8" ref="2">
    <original>CWL</original>
    <variation>WWV</variation>
    <location>
        <begin position="326"/>
        <end position="328"/>
    </location>
</feature>
<feature type="sequence conflict" description="In Ref. 2; AAC06330." evidence="8" ref="2">
    <original>R</original>
    <variation>A</variation>
    <location>
        <position position="448"/>
    </location>
</feature>
<feature type="sequence conflict" description="In Ref. 2; AAC06330." evidence="8" ref="2">
    <original>T</original>
    <variation>S</variation>
    <location>
        <position position="458"/>
    </location>
</feature>
<feature type="sequence conflict" description="In Ref. 2; AAC06330." evidence="8" ref="2">
    <original>AS</original>
    <variation>SF</variation>
    <location>
        <begin position="463"/>
        <end position="464"/>
    </location>
</feature>
<comment type="function">
    <text evidence="2 4">Beta-adrenergic receptors mediate the catecholamine-induced activation of adenylate cyclase through the action of G proteins. This receptor binds epinephrine and norepinephrine with approximately equal affinity. Mediates Ras activation through G(s)-alpha- and cAMP-mediated signaling (By similarity). Involved in the regulation of sleep/wake behaviors (By similarity).</text>
</comment>
<comment type="subunit">
    <text evidence="2">Interacts (via C-terminus PDZ motif) with RAPGEF2; the interaction is direct. Interacts with GOPC, MAGI3 and DLG4 (By similarity).</text>
</comment>
<comment type="subcellular location">
    <subcellularLocation>
        <location evidence="3">Cell membrane</location>
        <topology evidence="3">Multi-pass membrane protein</topology>
    </subcellularLocation>
    <subcellularLocation>
        <location evidence="1">Early endosome</location>
    </subcellularLocation>
    <text evidence="1">Colocalizes with RAPGEF2 at the plasma membrane. Found in the Golgi upon GOPC overexpression (By similarity).</text>
</comment>
<comment type="domain">
    <text evidence="1">The PDZ domain-binding motif mediates competitive interactions with GOPC, MAGI3 and DLG4 and plays a role in subcellular location of the receptor.</text>
</comment>
<comment type="PTM">
    <text evidence="1">Homologous desensitization of the receptor is mediated by its phosphorylation by beta-adrenergic receptor kinase.</text>
</comment>
<comment type="similarity">
    <text evidence="6">Belongs to the G-protein coupled receptor 1 family. Adrenergic receptor subfamily. ADRB1 sub-subfamily.</text>
</comment>